<protein>
    <recommendedName>
        <fullName>Toxin-like structure LSTX-D1</fullName>
    </recommendedName>
</protein>
<proteinExistence type="evidence at transcript level"/>
<name>TXZ01_LYCSI</name>
<feature type="signal peptide" evidence="2">
    <location>
        <begin position="1"/>
        <end position="22"/>
    </location>
</feature>
<feature type="propeptide" id="PRO_0000401693" evidence="1">
    <location>
        <begin position="23"/>
        <end position="44"/>
    </location>
</feature>
<feature type="chain" id="PRO_0000401694" description="Toxin-like structure LSTX-D1">
    <location>
        <begin position="45"/>
        <end position="115"/>
    </location>
</feature>
<feature type="disulfide bond" evidence="1">
    <location>
        <begin position="48"/>
        <end position="63"/>
    </location>
</feature>
<feature type="disulfide bond" evidence="1">
    <location>
        <begin position="55"/>
        <end position="72"/>
    </location>
</feature>
<feature type="disulfide bond" evidence="1">
    <location>
        <begin position="62"/>
        <end position="87"/>
    </location>
</feature>
<feature type="disulfide bond" evidence="1">
    <location>
        <begin position="74"/>
        <end position="85"/>
    </location>
</feature>
<comment type="subcellular location">
    <subcellularLocation>
        <location evidence="1">Secreted</location>
    </subcellularLocation>
</comment>
<comment type="tissue specificity">
    <text>Expressed by the venom gland.</text>
</comment>
<comment type="domain">
    <text evidence="1">The presence of a 'disulfide through disulfide knot' structurally defines this protein as a knottin.</text>
</comment>
<comment type="similarity">
    <text evidence="3">Belongs to the neurotoxin 19 (CSTX) family. 01 subfamily.</text>
</comment>
<organism>
    <name type="scientific">Lycosa singoriensis</name>
    <name type="common">Wolf spider</name>
    <name type="synonym">Aranea singoriensis</name>
    <dbReference type="NCBI Taxonomy" id="434756"/>
    <lineage>
        <taxon>Eukaryota</taxon>
        <taxon>Metazoa</taxon>
        <taxon>Ecdysozoa</taxon>
        <taxon>Arthropoda</taxon>
        <taxon>Chelicerata</taxon>
        <taxon>Arachnida</taxon>
        <taxon>Araneae</taxon>
        <taxon>Araneomorphae</taxon>
        <taxon>Entelegynae</taxon>
        <taxon>Lycosoidea</taxon>
        <taxon>Lycosidae</taxon>
        <taxon>Lycosa</taxon>
    </lineage>
</organism>
<sequence length="115" mass="13130">MKVLVLFSVLFLTLFSYSSTEAIDEFDSDAEEDMLSLMANEQVRAKACTPRLHDCSHDRHSCCRSELFKDVCTCFYPEGGDNEVCTCQQPKHLKYMEKAADKAKKFGGKIKKWFG</sequence>
<evidence type="ECO:0000250" key="1"/>
<evidence type="ECO:0000255" key="2"/>
<evidence type="ECO:0000305" key="3"/>
<accession>B6DCU0</accession>
<dbReference type="EMBL" id="EU926024">
    <property type="protein sequence ID" value="ACI41356.1"/>
    <property type="molecule type" value="mRNA"/>
</dbReference>
<dbReference type="EMBL" id="FM864028">
    <property type="protein sequence ID" value="CAS03625.1"/>
    <property type="molecule type" value="mRNA"/>
</dbReference>
<dbReference type="SMR" id="B6DCU0"/>
<dbReference type="ArachnoServer" id="AS001786">
    <property type="toxin name" value="U3-lycotoxin-Ls1y"/>
</dbReference>
<dbReference type="GO" id="GO:0005576">
    <property type="term" value="C:extracellular region"/>
    <property type="evidence" value="ECO:0007669"/>
    <property type="project" value="UniProtKB-SubCell"/>
</dbReference>
<dbReference type="GO" id="GO:0090729">
    <property type="term" value="F:toxin activity"/>
    <property type="evidence" value="ECO:0007669"/>
    <property type="project" value="UniProtKB-KW"/>
</dbReference>
<dbReference type="InterPro" id="IPR019553">
    <property type="entry name" value="Spider_toxin_CSTX_knottin"/>
</dbReference>
<dbReference type="InterPro" id="IPR011142">
    <property type="entry name" value="Spider_toxin_CSTX_Knottin_CS"/>
</dbReference>
<dbReference type="Pfam" id="PF10530">
    <property type="entry name" value="Toxin_35"/>
    <property type="match status" value="1"/>
</dbReference>
<dbReference type="PROSITE" id="PS60029">
    <property type="entry name" value="SPIDER_CSTX"/>
    <property type="match status" value="1"/>
</dbReference>
<reference key="1">
    <citation type="journal article" date="2010" name="Zoology">
        <title>Transcriptome analysis of the venom glands of the Chinese wolf spider Lycosa singoriensis.</title>
        <authorList>
            <person name="Zhang Y."/>
            <person name="Chen J."/>
            <person name="Tang X."/>
            <person name="Wang F."/>
            <person name="Jiang L."/>
            <person name="Xiong X."/>
            <person name="Wang M."/>
            <person name="Rong M."/>
            <person name="Liu Z."/>
            <person name="Liang S."/>
        </authorList>
    </citation>
    <scope>NUCLEOTIDE SEQUENCE [LARGE SCALE MRNA]</scope>
    <source>
        <tissue>Venom gland</tissue>
    </source>
</reference>
<keyword id="KW-1015">Disulfide bond</keyword>
<keyword id="KW-0964">Secreted</keyword>
<keyword id="KW-0732">Signal</keyword>
<keyword id="KW-0800">Toxin</keyword>